<reference key="1">
    <citation type="journal article" date="1992" name="Gene">
        <title>Sequence of a cluster of genes controlling synthesis and secretion of alkaline protease in Pseudomonas aeruginosa: relationships to other secretory pathways.</title>
        <authorList>
            <person name="Duong F."/>
            <person name="Lazdunski A."/>
            <person name="Cami B."/>
            <person name="Murgier M."/>
        </authorList>
    </citation>
    <scope>NUCLEOTIDE SEQUENCE [GENOMIC DNA]</scope>
    <source>
        <strain>ATCC 15692 / DSM 22644 / CIP 104116 / JCM 14847 / LMG 12228 / 1C / PRS 101 / PAO1</strain>
    </source>
</reference>
<reference key="2">
    <citation type="journal article" date="2000" name="Nature">
        <title>Complete genome sequence of Pseudomonas aeruginosa PAO1, an opportunistic pathogen.</title>
        <authorList>
            <person name="Stover C.K."/>
            <person name="Pham X.-Q.T."/>
            <person name="Erwin A.L."/>
            <person name="Mizoguchi S.D."/>
            <person name="Warrener P."/>
            <person name="Hickey M.J."/>
            <person name="Brinkman F.S.L."/>
            <person name="Hufnagle W.O."/>
            <person name="Kowalik D.J."/>
            <person name="Lagrou M."/>
            <person name="Garber R.L."/>
            <person name="Goltry L."/>
            <person name="Tolentino E."/>
            <person name="Westbrock-Wadman S."/>
            <person name="Yuan Y."/>
            <person name="Brody L.L."/>
            <person name="Coulter S.N."/>
            <person name="Folger K.R."/>
            <person name="Kas A."/>
            <person name="Larbig K."/>
            <person name="Lim R.M."/>
            <person name="Smith K.A."/>
            <person name="Spencer D.H."/>
            <person name="Wong G.K.-S."/>
            <person name="Wu Z."/>
            <person name="Paulsen I.T."/>
            <person name="Reizer J."/>
            <person name="Saier M.H. Jr."/>
            <person name="Hancock R.E.W."/>
            <person name="Lory S."/>
            <person name="Olson M.V."/>
        </authorList>
    </citation>
    <scope>NUCLEOTIDE SEQUENCE [LARGE SCALE GENOMIC DNA]</scope>
    <source>
        <strain>ATCC 15692 / DSM 22644 / CIP 104116 / JCM 14847 / LMG 12228 / 1C / PRS 101 / PAO1</strain>
    </source>
</reference>
<comment type="function">
    <text>Involved in the secretion of alkaline protease.</text>
</comment>
<comment type="subcellular location">
    <subcellularLocation>
        <location>Cell outer membrane</location>
    </subcellularLocation>
</comment>
<comment type="similarity">
    <text evidence="2">Belongs to the outer membrane factor (OMF) (TC 1.B.17) family.</text>
</comment>
<protein>
    <recommendedName>
        <fullName>Alkaline protease secretion protein AprF</fullName>
    </recommendedName>
</protein>
<feature type="chain" id="PRO_0000196246" description="Alkaline protease secretion protein AprF">
    <location>
        <begin position="1"/>
        <end position="481"/>
    </location>
</feature>
<feature type="region of interest" description="Disordered" evidence="1">
    <location>
        <begin position="462"/>
        <end position="481"/>
    </location>
</feature>
<feature type="compositionally biased region" description="Basic and acidic residues" evidence="1">
    <location>
        <begin position="469"/>
        <end position="481"/>
    </location>
</feature>
<accession>Q03027</accession>
<name>APRF_PSEAE</name>
<keyword id="KW-0998">Cell outer membrane</keyword>
<keyword id="KW-0472">Membrane</keyword>
<keyword id="KW-1185">Reference proteome</keyword>
<keyword id="KW-0812">Transmembrane</keyword>
<keyword id="KW-1134">Transmembrane beta strand</keyword>
<keyword id="KW-0813">Transport</keyword>
<sequence length="481" mass="54471">MTMRRLMTWLFGAFLLLLREDAFALGLLDGYHLALENDPQFQAAIQEHEAGRQYRALGRAALLPRLVYSYNRGRSWSDVTQTTTRGDFKEDRDYDSYVSTLSLQQPLFDYEAFSRYRKGVAQALLSDERFRSQSQELLVRVLEAYTGALLAQDQIELARAQKRSYREQFQLNQRQFERGNGTRTDTLETQARFNLAQAQEIEARDSQDAALRELERLVGAPLEIADLAPLGERFQVRPLSPASYTAWRDLALAENPELASLRHAVDVARYEVEQNRADFLPRLGLYASTGKSKSGSENTYNQRYETDSVGIQLSVPLFSGGETLAATRQATHRMEKSHYDLDDKVRETLNQVRKMYNQSSSSAAKIRAYEMTVDSARTLVMATRKSIAAGVRVNLDLLNAEQALYSAMNELSKAKYDYLTAWARLRFYAGVLDEADLELVAANFVSGETPARRRDCATTDCPAPLHTLSKTDTEENRSALN</sequence>
<proteinExistence type="inferred from homology"/>
<gene>
    <name type="primary">aprF</name>
    <name type="ordered locus">PA1248</name>
</gene>
<organism>
    <name type="scientific">Pseudomonas aeruginosa (strain ATCC 15692 / DSM 22644 / CIP 104116 / JCM 14847 / LMG 12228 / 1C / PRS 101 / PAO1)</name>
    <dbReference type="NCBI Taxonomy" id="208964"/>
    <lineage>
        <taxon>Bacteria</taxon>
        <taxon>Pseudomonadati</taxon>
        <taxon>Pseudomonadota</taxon>
        <taxon>Gammaproteobacteria</taxon>
        <taxon>Pseudomonadales</taxon>
        <taxon>Pseudomonadaceae</taxon>
        <taxon>Pseudomonas</taxon>
    </lineage>
</organism>
<evidence type="ECO:0000256" key="1">
    <source>
        <dbReference type="SAM" id="MobiDB-lite"/>
    </source>
</evidence>
<evidence type="ECO:0000305" key="2"/>
<dbReference type="EMBL" id="X64558">
    <property type="protein sequence ID" value="CAA45857.1"/>
    <property type="molecule type" value="Genomic_DNA"/>
</dbReference>
<dbReference type="EMBL" id="AE004091">
    <property type="protein sequence ID" value="AAG04637.1"/>
    <property type="molecule type" value="Genomic_DNA"/>
</dbReference>
<dbReference type="PIR" id="S26698">
    <property type="entry name" value="S26698"/>
</dbReference>
<dbReference type="RefSeq" id="NP_249939.1">
    <property type="nucleotide sequence ID" value="NC_002516.2"/>
</dbReference>
<dbReference type="RefSeq" id="WP_003110827.1">
    <property type="nucleotide sequence ID" value="NZ_QZGE01000005.1"/>
</dbReference>
<dbReference type="SMR" id="Q03027"/>
<dbReference type="STRING" id="208964.PA1248"/>
<dbReference type="PaxDb" id="208964-PA1248"/>
<dbReference type="GeneID" id="881227"/>
<dbReference type="KEGG" id="pae:PA1248"/>
<dbReference type="PATRIC" id="fig|208964.12.peg.1295"/>
<dbReference type="PseudoCAP" id="PA1248"/>
<dbReference type="HOGENOM" id="CLU_012817_0_2_6"/>
<dbReference type="InParanoid" id="Q03027"/>
<dbReference type="OrthoDB" id="9813458at2"/>
<dbReference type="PhylomeDB" id="Q03027"/>
<dbReference type="BioCyc" id="PAER208964:G1FZ6-1273-MONOMER"/>
<dbReference type="Proteomes" id="UP000002438">
    <property type="component" value="Chromosome"/>
</dbReference>
<dbReference type="GO" id="GO:0009279">
    <property type="term" value="C:cell outer membrane"/>
    <property type="evidence" value="ECO:0007669"/>
    <property type="project" value="UniProtKB-SubCell"/>
</dbReference>
<dbReference type="GO" id="GO:1990281">
    <property type="term" value="C:efflux pump complex"/>
    <property type="evidence" value="ECO:0000318"/>
    <property type="project" value="GO_Central"/>
</dbReference>
<dbReference type="GO" id="GO:0015562">
    <property type="term" value="F:efflux transmembrane transporter activity"/>
    <property type="evidence" value="ECO:0000318"/>
    <property type="project" value="GO_Central"/>
</dbReference>
<dbReference type="GO" id="GO:0015288">
    <property type="term" value="F:porin activity"/>
    <property type="evidence" value="ECO:0000318"/>
    <property type="project" value="GO_Central"/>
</dbReference>
<dbReference type="GO" id="GO:0046903">
    <property type="term" value="P:secretion"/>
    <property type="evidence" value="ECO:0000314"/>
    <property type="project" value="PseudoCAP"/>
</dbReference>
<dbReference type="FunFam" id="1.20.1600.10:FF:000014">
    <property type="entry name" value="Alkaline protease secretion protein AprF"/>
    <property type="match status" value="1"/>
</dbReference>
<dbReference type="Gene3D" id="1.20.1600.10">
    <property type="entry name" value="Outer membrane efflux proteins (OEP)"/>
    <property type="match status" value="1"/>
</dbReference>
<dbReference type="InterPro" id="IPR051906">
    <property type="entry name" value="Bacterial_OMF"/>
</dbReference>
<dbReference type="InterPro" id="IPR003423">
    <property type="entry name" value="OMP_efflux"/>
</dbReference>
<dbReference type="InterPro" id="IPR010130">
    <property type="entry name" value="T1SS_OMP_TolC"/>
</dbReference>
<dbReference type="NCBIfam" id="TIGR01844">
    <property type="entry name" value="type_I_sec_TolC"/>
    <property type="match status" value="1"/>
</dbReference>
<dbReference type="PANTHER" id="PTHR30026">
    <property type="entry name" value="OUTER MEMBRANE PROTEIN TOLC"/>
    <property type="match status" value="1"/>
</dbReference>
<dbReference type="PANTHER" id="PTHR30026:SF20">
    <property type="entry name" value="OUTER MEMBRANE PROTEIN TOLC"/>
    <property type="match status" value="1"/>
</dbReference>
<dbReference type="Pfam" id="PF02321">
    <property type="entry name" value="OEP"/>
    <property type="match status" value="2"/>
</dbReference>
<dbReference type="SUPFAM" id="SSF56954">
    <property type="entry name" value="Outer membrane efflux proteins (OEP)"/>
    <property type="match status" value="1"/>
</dbReference>